<gene>
    <name evidence="1" type="primary">trpB</name>
    <name type="ordered locus">SG1389</name>
</gene>
<name>TRPB_SALG2</name>
<evidence type="ECO:0000255" key="1">
    <source>
        <dbReference type="HAMAP-Rule" id="MF_00133"/>
    </source>
</evidence>
<accession>B5R6M5</accession>
<protein>
    <recommendedName>
        <fullName evidence="1">Tryptophan synthase beta chain</fullName>
        <ecNumber evidence="1">4.2.1.20</ecNumber>
    </recommendedName>
</protein>
<feature type="chain" id="PRO_1000095818" description="Tryptophan synthase beta chain">
    <location>
        <begin position="1"/>
        <end position="397"/>
    </location>
</feature>
<feature type="modified residue" description="N6-(pyridoxal phosphate)lysine" evidence="1">
    <location>
        <position position="87"/>
    </location>
</feature>
<dbReference type="EC" id="4.2.1.20" evidence="1"/>
<dbReference type="EMBL" id="AM933173">
    <property type="protein sequence ID" value="CAR37262.1"/>
    <property type="molecule type" value="Genomic_DNA"/>
</dbReference>
<dbReference type="RefSeq" id="WP_000209485.1">
    <property type="nucleotide sequence ID" value="NC_011274.1"/>
</dbReference>
<dbReference type="SMR" id="B5R6M5"/>
<dbReference type="KEGG" id="seg:SG1389"/>
<dbReference type="HOGENOM" id="CLU_016734_3_1_6"/>
<dbReference type="UniPathway" id="UPA00035">
    <property type="reaction ID" value="UER00044"/>
</dbReference>
<dbReference type="Proteomes" id="UP000008321">
    <property type="component" value="Chromosome"/>
</dbReference>
<dbReference type="GO" id="GO:0005737">
    <property type="term" value="C:cytoplasm"/>
    <property type="evidence" value="ECO:0007669"/>
    <property type="project" value="TreeGrafter"/>
</dbReference>
<dbReference type="GO" id="GO:0004834">
    <property type="term" value="F:tryptophan synthase activity"/>
    <property type="evidence" value="ECO:0007669"/>
    <property type="project" value="UniProtKB-UniRule"/>
</dbReference>
<dbReference type="CDD" id="cd06446">
    <property type="entry name" value="Trp-synth_B"/>
    <property type="match status" value="1"/>
</dbReference>
<dbReference type="FunFam" id="3.40.50.1100:FF:000001">
    <property type="entry name" value="Tryptophan synthase beta chain"/>
    <property type="match status" value="1"/>
</dbReference>
<dbReference type="FunFam" id="3.40.50.1100:FF:000004">
    <property type="entry name" value="Tryptophan synthase beta chain"/>
    <property type="match status" value="1"/>
</dbReference>
<dbReference type="Gene3D" id="3.40.50.1100">
    <property type="match status" value="2"/>
</dbReference>
<dbReference type="HAMAP" id="MF_00133">
    <property type="entry name" value="Trp_synth_beta"/>
    <property type="match status" value="1"/>
</dbReference>
<dbReference type="InterPro" id="IPR006653">
    <property type="entry name" value="Trp_synth_b_CS"/>
</dbReference>
<dbReference type="InterPro" id="IPR006654">
    <property type="entry name" value="Trp_synth_beta"/>
</dbReference>
<dbReference type="InterPro" id="IPR023026">
    <property type="entry name" value="Trp_synth_beta/beta-like"/>
</dbReference>
<dbReference type="InterPro" id="IPR001926">
    <property type="entry name" value="TrpB-like_PALP"/>
</dbReference>
<dbReference type="InterPro" id="IPR036052">
    <property type="entry name" value="TrpB-like_PALP_sf"/>
</dbReference>
<dbReference type="NCBIfam" id="TIGR00263">
    <property type="entry name" value="trpB"/>
    <property type="match status" value="1"/>
</dbReference>
<dbReference type="PANTHER" id="PTHR48077:SF3">
    <property type="entry name" value="TRYPTOPHAN SYNTHASE"/>
    <property type="match status" value="1"/>
</dbReference>
<dbReference type="PANTHER" id="PTHR48077">
    <property type="entry name" value="TRYPTOPHAN SYNTHASE-RELATED"/>
    <property type="match status" value="1"/>
</dbReference>
<dbReference type="Pfam" id="PF00291">
    <property type="entry name" value="PALP"/>
    <property type="match status" value="1"/>
</dbReference>
<dbReference type="PIRSF" id="PIRSF001413">
    <property type="entry name" value="Trp_syn_beta"/>
    <property type="match status" value="1"/>
</dbReference>
<dbReference type="SUPFAM" id="SSF53686">
    <property type="entry name" value="Tryptophan synthase beta subunit-like PLP-dependent enzymes"/>
    <property type="match status" value="1"/>
</dbReference>
<dbReference type="PROSITE" id="PS00168">
    <property type="entry name" value="TRP_SYNTHASE_BETA"/>
    <property type="match status" value="1"/>
</dbReference>
<proteinExistence type="inferred from homology"/>
<reference key="1">
    <citation type="journal article" date="2008" name="Genome Res.">
        <title>Comparative genome analysis of Salmonella enteritidis PT4 and Salmonella gallinarum 287/91 provides insights into evolutionary and host adaptation pathways.</title>
        <authorList>
            <person name="Thomson N.R."/>
            <person name="Clayton D.J."/>
            <person name="Windhorst D."/>
            <person name="Vernikos G."/>
            <person name="Davidson S."/>
            <person name="Churcher C."/>
            <person name="Quail M.A."/>
            <person name="Stevens M."/>
            <person name="Jones M.A."/>
            <person name="Watson M."/>
            <person name="Barron A."/>
            <person name="Layton A."/>
            <person name="Pickard D."/>
            <person name="Kingsley R.A."/>
            <person name="Bignell A."/>
            <person name="Clark L."/>
            <person name="Harris B."/>
            <person name="Ormond D."/>
            <person name="Abdellah Z."/>
            <person name="Brooks K."/>
            <person name="Cherevach I."/>
            <person name="Chillingworth T."/>
            <person name="Woodward J."/>
            <person name="Norberczak H."/>
            <person name="Lord A."/>
            <person name="Arrowsmith C."/>
            <person name="Jagels K."/>
            <person name="Moule S."/>
            <person name="Mungall K."/>
            <person name="Saunders M."/>
            <person name="Whitehead S."/>
            <person name="Chabalgoity J.A."/>
            <person name="Maskell D."/>
            <person name="Humphreys T."/>
            <person name="Roberts M."/>
            <person name="Barrow P.A."/>
            <person name="Dougan G."/>
            <person name="Parkhill J."/>
        </authorList>
    </citation>
    <scope>NUCLEOTIDE SEQUENCE [LARGE SCALE GENOMIC DNA]</scope>
    <source>
        <strain>287/91 / NCTC 13346</strain>
    </source>
</reference>
<keyword id="KW-0028">Amino-acid biosynthesis</keyword>
<keyword id="KW-0057">Aromatic amino acid biosynthesis</keyword>
<keyword id="KW-0456">Lyase</keyword>
<keyword id="KW-0663">Pyridoxal phosphate</keyword>
<keyword id="KW-0822">Tryptophan biosynthesis</keyword>
<comment type="function">
    <text evidence="1">The beta subunit is responsible for the synthesis of L-tryptophan from indole and L-serine.</text>
</comment>
<comment type="catalytic activity">
    <reaction evidence="1">
        <text>(1S,2R)-1-C-(indol-3-yl)glycerol 3-phosphate + L-serine = D-glyceraldehyde 3-phosphate + L-tryptophan + H2O</text>
        <dbReference type="Rhea" id="RHEA:10532"/>
        <dbReference type="ChEBI" id="CHEBI:15377"/>
        <dbReference type="ChEBI" id="CHEBI:33384"/>
        <dbReference type="ChEBI" id="CHEBI:57912"/>
        <dbReference type="ChEBI" id="CHEBI:58866"/>
        <dbReference type="ChEBI" id="CHEBI:59776"/>
        <dbReference type="EC" id="4.2.1.20"/>
    </reaction>
</comment>
<comment type="cofactor">
    <cofactor evidence="1">
        <name>pyridoxal 5'-phosphate</name>
        <dbReference type="ChEBI" id="CHEBI:597326"/>
    </cofactor>
</comment>
<comment type="pathway">
    <text evidence="1">Amino-acid biosynthesis; L-tryptophan biosynthesis; L-tryptophan from chorismate: step 5/5.</text>
</comment>
<comment type="subunit">
    <text evidence="1">Tetramer of two alpha and two beta chains.</text>
</comment>
<comment type="similarity">
    <text evidence="1">Belongs to the TrpB family.</text>
</comment>
<organism>
    <name type="scientific">Salmonella gallinarum (strain 287/91 / NCTC 13346)</name>
    <dbReference type="NCBI Taxonomy" id="550538"/>
    <lineage>
        <taxon>Bacteria</taxon>
        <taxon>Pseudomonadati</taxon>
        <taxon>Pseudomonadota</taxon>
        <taxon>Gammaproteobacteria</taxon>
        <taxon>Enterobacterales</taxon>
        <taxon>Enterobacteriaceae</taxon>
        <taxon>Salmonella</taxon>
    </lineage>
</organism>
<sequence>MTTLLNPYFGEFGGMYVPQILMPALNQLEEAFVSAQKDPEFQAQFADLLKNYAGRPTALTKCQNITAGTRTTLYLKREDLLHGGAHKTNQVLGQALLAKRMGKSEIIAETGAGQHGVASALASALLGLKCRIYMGAKDVERQSPNVFRMRLMGAEVIPVHSGSATLKDACNEALRDWSGSYETAHYMLGTAAGPHPYPTIVREFQRMIGEETKAQILDKEGRLPDAVIACVGGGSNAIGMFADFINDTSVGLIGVEPGGHGIETGEHGAPLKHGRVGIYFGMKAPMMQTADGQIEESYSISAGLDFPSVGPQHAYLNSIGRADYVSITDDEALEAFKTLCRHEGIIPALESSHALAHALKMMREQPEKEQLLVVNLSGRGDKDIFTVHDILKARGEI</sequence>